<comment type="function">
    <text evidence="1">Channel that opens in response to stretch forces in the membrane lipid bilayer. May participate in the regulation of osmotic pressure changes within the cell.</text>
</comment>
<comment type="subunit">
    <text evidence="1">Homopentamer.</text>
</comment>
<comment type="subcellular location">
    <subcellularLocation>
        <location evidence="1">Cell membrane</location>
        <topology evidence="1">Multi-pass membrane protein</topology>
    </subcellularLocation>
</comment>
<comment type="similarity">
    <text evidence="1 2">Belongs to the MscL family.</text>
</comment>
<gene>
    <name evidence="1" type="primary">mscL</name>
    <name type="ordered locus">SAV1347</name>
</gene>
<sequence>MLKEFKEFALKGNVLDLAIAVVMGAAFNKIISSLVENIIMPLIGKIFGSVDFAKEWSFWGIKYGLFIQSVIDFIIIAFALFIFVKIANTLMKKEEAEEEAVVEENVVLLTEIRDLLREKK</sequence>
<protein>
    <recommendedName>
        <fullName evidence="1">Large-conductance mechanosensitive channel</fullName>
    </recommendedName>
</protein>
<feature type="chain" id="PRO_0000192461" description="Large-conductance mechanosensitive channel">
    <location>
        <begin position="1"/>
        <end position="120"/>
    </location>
</feature>
<feature type="transmembrane region" description="Helical" evidence="1">
    <location>
        <begin position="7"/>
        <end position="27"/>
    </location>
</feature>
<feature type="transmembrane region" description="Helical" evidence="1">
    <location>
        <begin position="64"/>
        <end position="84"/>
    </location>
</feature>
<dbReference type="EMBL" id="BA000017">
    <property type="protein sequence ID" value="BAB57509.1"/>
    <property type="molecule type" value="Genomic_DNA"/>
</dbReference>
<dbReference type="RefSeq" id="WP_000910489.1">
    <property type="nucleotide sequence ID" value="NC_002758.2"/>
</dbReference>
<dbReference type="SMR" id="P68803"/>
<dbReference type="KEGG" id="sav:SAV1347"/>
<dbReference type="HOGENOM" id="CLU_095787_0_0_9"/>
<dbReference type="PhylomeDB" id="P68803"/>
<dbReference type="Proteomes" id="UP000002481">
    <property type="component" value="Chromosome"/>
</dbReference>
<dbReference type="GO" id="GO:0005886">
    <property type="term" value="C:plasma membrane"/>
    <property type="evidence" value="ECO:0007669"/>
    <property type="project" value="UniProtKB-SubCell"/>
</dbReference>
<dbReference type="GO" id="GO:0008381">
    <property type="term" value="F:mechanosensitive monoatomic ion channel activity"/>
    <property type="evidence" value="ECO:0007669"/>
    <property type="project" value="UniProtKB-UniRule"/>
</dbReference>
<dbReference type="FunFam" id="1.10.1200.120:FF:000002">
    <property type="entry name" value="Large-conductance mechanosensitive channel"/>
    <property type="match status" value="1"/>
</dbReference>
<dbReference type="Gene3D" id="1.10.1200.120">
    <property type="entry name" value="Large-conductance mechanosensitive channel, MscL, domain 1"/>
    <property type="match status" value="1"/>
</dbReference>
<dbReference type="HAMAP" id="MF_00115">
    <property type="entry name" value="MscL"/>
    <property type="match status" value="1"/>
</dbReference>
<dbReference type="InterPro" id="IPR019823">
    <property type="entry name" value="Mechanosensitive_channel_CS"/>
</dbReference>
<dbReference type="InterPro" id="IPR001185">
    <property type="entry name" value="MS_channel"/>
</dbReference>
<dbReference type="InterPro" id="IPR037673">
    <property type="entry name" value="MSC/AndL"/>
</dbReference>
<dbReference type="InterPro" id="IPR036019">
    <property type="entry name" value="MscL_channel"/>
</dbReference>
<dbReference type="NCBIfam" id="TIGR00220">
    <property type="entry name" value="mscL"/>
    <property type="match status" value="1"/>
</dbReference>
<dbReference type="NCBIfam" id="NF010559">
    <property type="entry name" value="PRK13954.1"/>
    <property type="match status" value="1"/>
</dbReference>
<dbReference type="PANTHER" id="PTHR30266:SF2">
    <property type="entry name" value="LARGE-CONDUCTANCE MECHANOSENSITIVE CHANNEL"/>
    <property type="match status" value="1"/>
</dbReference>
<dbReference type="PANTHER" id="PTHR30266">
    <property type="entry name" value="MECHANOSENSITIVE CHANNEL MSCL"/>
    <property type="match status" value="1"/>
</dbReference>
<dbReference type="Pfam" id="PF01741">
    <property type="entry name" value="MscL"/>
    <property type="match status" value="1"/>
</dbReference>
<dbReference type="PRINTS" id="PR01264">
    <property type="entry name" value="MECHCHANNEL"/>
</dbReference>
<dbReference type="SUPFAM" id="SSF81330">
    <property type="entry name" value="Gated mechanosensitive channel"/>
    <property type="match status" value="1"/>
</dbReference>
<dbReference type="PROSITE" id="PS01327">
    <property type="entry name" value="MSCL"/>
    <property type="match status" value="1"/>
</dbReference>
<reference key="1">
    <citation type="journal article" date="2001" name="Lancet">
        <title>Whole genome sequencing of meticillin-resistant Staphylococcus aureus.</title>
        <authorList>
            <person name="Kuroda M."/>
            <person name="Ohta T."/>
            <person name="Uchiyama I."/>
            <person name="Baba T."/>
            <person name="Yuzawa H."/>
            <person name="Kobayashi I."/>
            <person name="Cui L."/>
            <person name="Oguchi A."/>
            <person name="Aoki K."/>
            <person name="Nagai Y."/>
            <person name="Lian J.-Q."/>
            <person name="Ito T."/>
            <person name="Kanamori M."/>
            <person name="Matsumaru H."/>
            <person name="Maruyama A."/>
            <person name="Murakami H."/>
            <person name="Hosoyama A."/>
            <person name="Mizutani-Ui Y."/>
            <person name="Takahashi N.K."/>
            <person name="Sawano T."/>
            <person name="Inoue R."/>
            <person name="Kaito C."/>
            <person name="Sekimizu K."/>
            <person name="Hirakawa H."/>
            <person name="Kuhara S."/>
            <person name="Goto S."/>
            <person name="Yabuzaki J."/>
            <person name="Kanehisa M."/>
            <person name="Yamashita A."/>
            <person name="Oshima K."/>
            <person name="Furuya K."/>
            <person name="Yoshino C."/>
            <person name="Shiba T."/>
            <person name="Hattori M."/>
            <person name="Ogasawara N."/>
            <person name="Hayashi H."/>
            <person name="Hiramatsu K."/>
        </authorList>
    </citation>
    <scope>NUCLEOTIDE SEQUENCE [LARGE SCALE GENOMIC DNA]</scope>
    <source>
        <strain>Mu50 / ATCC 700699</strain>
    </source>
</reference>
<evidence type="ECO:0000255" key="1">
    <source>
        <dbReference type="HAMAP-Rule" id="MF_00115"/>
    </source>
</evidence>
<evidence type="ECO:0000305" key="2"/>
<accession>P68803</accession>
<accession>O68285</accession>
<proteinExistence type="inferred from homology"/>
<name>MSCL_STAAM</name>
<organism>
    <name type="scientific">Staphylococcus aureus (strain Mu50 / ATCC 700699)</name>
    <dbReference type="NCBI Taxonomy" id="158878"/>
    <lineage>
        <taxon>Bacteria</taxon>
        <taxon>Bacillati</taxon>
        <taxon>Bacillota</taxon>
        <taxon>Bacilli</taxon>
        <taxon>Bacillales</taxon>
        <taxon>Staphylococcaceae</taxon>
        <taxon>Staphylococcus</taxon>
    </lineage>
</organism>
<keyword id="KW-1003">Cell membrane</keyword>
<keyword id="KW-0407">Ion channel</keyword>
<keyword id="KW-0406">Ion transport</keyword>
<keyword id="KW-0472">Membrane</keyword>
<keyword id="KW-0812">Transmembrane</keyword>
<keyword id="KW-1133">Transmembrane helix</keyword>
<keyword id="KW-0813">Transport</keyword>